<keyword id="KW-0963">Cytoplasm</keyword>
<keyword id="KW-1185">Reference proteome</keyword>
<dbReference type="EMBL" id="CP000029">
    <property type="protein sequence ID" value="AAW54668.1"/>
    <property type="molecule type" value="Genomic_DNA"/>
</dbReference>
<dbReference type="RefSeq" id="WP_002494483.1">
    <property type="nucleotide sequence ID" value="NC_002976.3"/>
</dbReference>
<dbReference type="SMR" id="Q5HNJ5"/>
<dbReference type="STRING" id="176279.SERP1273"/>
<dbReference type="KEGG" id="ser:SERP1273"/>
<dbReference type="eggNOG" id="COG0589">
    <property type="taxonomic scope" value="Bacteria"/>
</dbReference>
<dbReference type="HOGENOM" id="CLU_049301_16_0_9"/>
<dbReference type="Proteomes" id="UP000000531">
    <property type="component" value="Chromosome"/>
</dbReference>
<dbReference type="GO" id="GO:0005737">
    <property type="term" value="C:cytoplasm"/>
    <property type="evidence" value="ECO:0007669"/>
    <property type="project" value="UniProtKB-SubCell"/>
</dbReference>
<dbReference type="CDD" id="cd00293">
    <property type="entry name" value="USP-like"/>
    <property type="match status" value="1"/>
</dbReference>
<dbReference type="Gene3D" id="3.40.50.620">
    <property type="entry name" value="HUPs"/>
    <property type="match status" value="1"/>
</dbReference>
<dbReference type="InterPro" id="IPR014729">
    <property type="entry name" value="Rossmann-like_a/b/a_fold"/>
</dbReference>
<dbReference type="InterPro" id="IPR006015">
    <property type="entry name" value="Universal_stress_UspA"/>
</dbReference>
<dbReference type="InterPro" id="IPR006016">
    <property type="entry name" value="UspA"/>
</dbReference>
<dbReference type="PANTHER" id="PTHR46268">
    <property type="entry name" value="STRESS RESPONSE PROTEIN NHAX"/>
    <property type="match status" value="1"/>
</dbReference>
<dbReference type="PANTHER" id="PTHR46268:SF6">
    <property type="entry name" value="UNIVERSAL STRESS PROTEIN UP12"/>
    <property type="match status" value="1"/>
</dbReference>
<dbReference type="Pfam" id="PF00582">
    <property type="entry name" value="Usp"/>
    <property type="match status" value="1"/>
</dbReference>
<dbReference type="PIRSF" id="PIRSF006276">
    <property type="entry name" value="UspA"/>
    <property type="match status" value="1"/>
</dbReference>
<dbReference type="PRINTS" id="PR01438">
    <property type="entry name" value="UNVRSLSTRESS"/>
</dbReference>
<dbReference type="SUPFAM" id="SSF52402">
    <property type="entry name" value="Adenine nucleotide alpha hydrolases-like"/>
    <property type="match status" value="1"/>
</dbReference>
<protein>
    <recommendedName>
        <fullName>Putative universal stress protein SERP1273</fullName>
    </recommendedName>
</protein>
<evidence type="ECO:0000250" key="1"/>
<evidence type="ECO:0000305" key="2"/>
<organism>
    <name type="scientific">Staphylococcus epidermidis (strain ATCC 35984 / DSM 28319 / BCRC 17069 / CCUG 31568 / BM 3577 / RP62A)</name>
    <dbReference type="NCBI Taxonomy" id="176279"/>
    <lineage>
        <taxon>Bacteria</taxon>
        <taxon>Bacillati</taxon>
        <taxon>Bacillota</taxon>
        <taxon>Bacilli</taxon>
        <taxon>Bacillales</taxon>
        <taxon>Staphylococcaceae</taxon>
        <taxon>Staphylococcus</taxon>
    </lineage>
</organism>
<proteinExistence type="inferred from homology"/>
<sequence length="166" mass="18423">MISYKNILIAVDGSHEAEWAFNKAVGVAKRNDAQLTIVNVIDSRTYSSYEVYDAQFTEKSKHFSEELLKGYKEVATNAGVKNVDTRLEFGSPKAIIPKKLARDVGADLIMSGTSGLNAVERFIVGSVSEAIVRHAPCDVLVVRTEEMPEDFQPQVATPQLREKYQD</sequence>
<reference key="1">
    <citation type="journal article" date="2005" name="J. Bacteriol.">
        <title>Insights on evolution of virulence and resistance from the complete genome analysis of an early methicillin-resistant Staphylococcus aureus strain and a biofilm-producing methicillin-resistant Staphylococcus epidermidis strain.</title>
        <authorList>
            <person name="Gill S.R."/>
            <person name="Fouts D.E."/>
            <person name="Archer G.L."/>
            <person name="Mongodin E.F."/>
            <person name="DeBoy R.T."/>
            <person name="Ravel J."/>
            <person name="Paulsen I.T."/>
            <person name="Kolonay J.F."/>
            <person name="Brinkac L.M."/>
            <person name="Beanan M.J."/>
            <person name="Dodson R.J."/>
            <person name="Daugherty S.C."/>
            <person name="Madupu R."/>
            <person name="Angiuoli S.V."/>
            <person name="Durkin A.S."/>
            <person name="Haft D.H."/>
            <person name="Vamathevan J.J."/>
            <person name="Khouri H."/>
            <person name="Utterback T.R."/>
            <person name="Lee C."/>
            <person name="Dimitrov G."/>
            <person name="Jiang L."/>
            <person name="Qin H."/>
            <person name="Weidman J."/>
            <person name="Tran K."/>
            <person name="Kang K.H."/>
            <person name="Hance I.R."/>
            <person name="Nelson K.E."/>
            <person name="Fraser C.M."/>
        </authorList>
    </citation>
    <scope>NUCLEOTIDE SEQUENCE [LARGE SCALE GENOMIC DNA]</scope>
    <source>
        <strain>ATCC 35984 / DSM 28319 / BCRC 17069 / CCUG 31568 / BM 3577 / RP62A</strain>
    </source>
</reference>
<comment type="subcellular location">
    <subcellularLocation>
        <location evidence="1">Cytoplasm</location>
    </subcellularLocation>
</comment>
<comment type="similarity">
    <text evidence="2">Belongs to the universal stress protein A family.</text>
</comment>
<feature type="chain" id="PRO_0000288899" description="Putative universal stress protein SERP1273">
    <location>
        <begin position="1"/>
        <end position="166"/>
    </location>
</feature>
<accession>Q5HNJ5</accession>
<gene>
    <name type="ordered locus">SERP1273</name>
</gene>
<name>Y1273_STAEQ</name>